<comment type="similarity">
    <text evidence="1">Belongs to the UPF0325 family.</text>
</comment>
<organism>
    <name type="scientific">Vibrio parahaemolyticus serotype O3:K6 (strain RIMD 2210633)</name>
    <dbReference type="NCBI Taxonomy" id="223926"/>
    <lineage>
        <taxon>Bacteria</taxon>
        <taxon>Pseudomonadati</taxon>
        <taxon>Pseudomonadota</taxon>
        <taxon>Gammaproteobacteria</taxon>
        <taxon>Vibrionales</taxon>
        <taxon>Vibrionaceae</taxon>
        <taxon>Vibrio</taxon>
    </lineage>
</organism>
<dbReference type="EMBL" id="BA000031">
    <property type="protein sequence ID" value="BAC60584.1"/>
    <property type="molecule type" value="Genomic_DNA"/>
</dbReference>
<dbReference type="RefSeq" id="NP_798700.1">
    <property type="nucleotide sequence ID" value="NC_004603.1"/>
</dbReference>
<dbReference type="RefSeq" id="WP_005456756.1">
    <property type="nucleotide sequence ID" value="NC_004603.1"/>
</dbReference>
<dbReference type="SMR" id="Q87MD5"/>
<dbReference type="GeneID" id="1189834"/>
<dbReference type="KEGG" id="vpa:VP2321"/>
<dbReference type="PATRIC" id="fig|223926.6.peg.2223"/>
<dbReference type="eggNOG" id="ENOG502ZBV4">
    <property type="taxonomic scope" value="Bacteria"/>
</dbReference>
<dbReference type="HOGENOM" id="CLU_136774_0_0_6"/>
<dbReference type="Proteomes" id="UP000002493">
    <property type="component" value="Chromosome 1"/>
</dbReference>
<dbReference type="HAMAP" id="MF_01519">
    <property type="entry name" value="UPF0325"/>
    <property type="match status" value="1"/>
</dbReference>
<dbReference type="InterPro" id="IPR020911">
    <property type="entry name" value="UPF0325"/>
</dbReference>
<dbReference type="NCBIfam" id="NF010213">
    <property type="entry name" value="PRK13677.1"/>
    <property type="match status" value="1"/>
</dbReference>
<dbReference type="Pfam" id="PF11944">
    <property type="entry name" value="DUF3461"/>
    <property type="match status" value="1"/>
</dbReference>
<sequence>MYPHLTGLGIHDPKQIERYSLRQEAHKDVLKIYFHKQKGEFFAKSVKFKYPRQVKNVLVDSGSHKYKEVTEINRNLTLVIDELNKITKPAKVSELDVKQKILSDLRHLEKVVSSKIAEIEADLEKLK</sequence>
<accession>Q87MD5</accession>
<protein>
    <recommendedName>
        <fullName evidence="1">UPF0325 protein VP2321</fullName>
    </recommendedName>
</protein>
<gene>
    <name type="ordered locus">VP2321</name>
</gene>
<proteinExistence type="inferred from homology"/>
<evidence type="ECO:0000255" key="1">
    <source>
        <dbReference type="HAMAP-Rule" id="MF_01519"/>
    </source>
</evidence>
<reference key="1">
    <citation type="journal article" date="2003" name="Lancet">
        <title>Genome sequence of Vibrio parahaemolyticus: a pathogenic mechanism distinct from that of V. cholerae.</title>
        <authorList>
            <person name="Makino K."/>
            <person name="Oshima K."/>
            <person name="Kurokawa K."/>
            <person name="Yokoyama K."/>
            <person name="Uda T."/>
            <person name="Tagomori K."/>
            <person name="Iijima Y."/>
            <person name="Najima M."/>
            <person name="Nakano M."/>
            <person name="Yamashita A."/>
            <person name="Kubota Y."/>
            <person name="Kimura S."/>
            <person name="Yasunaga T."/>
            <person name="Honda T."/>
            <person name="Shinagawa H."/>
            <person name="Hattori M."/>
            <person name="Iida T."/>
        </authorList>
    </citation>
    <scope>NUCLEOTIDE SEQUENCE [LARGE SCALE GENOMIC DNA]</scope>
    <source>
        <strain>RIMD 2210633</strain>
    </source>
</reference>
<feature type="chain" id="PRO_0000211848" description="UPF0325 protein VP2321">
    <location>
        <begin position="1"/>
        <end position="127"/>
    </location>
</feature>
<name>Y2321_VIBPA</name>